<sequence length="430" mass="49124">MRIGFLGFGKSNRSLLKYLLKHQEAKFFVSEAKTLDGETKKFLEEHSVEYEEGGHTEKLLDCDVVYVSPGIKPDTSIIKLLSSRGAKLSTELQLFLDNVDPKKVVGITGTDGKSTATALMHHVLSRRGFKTFLGGNFGTPAVEALEGEYDYYVLEMSSFQLFWSERPYLSNFLVLNISEDHLDWHSSFEEYVDSKLKPAFLQTEGDLFVYNKHIERLRNLEGVRSRKIPFWTGENFATERELIVHGKKYTLPGNYPYQTRENILAVSILYMEMFNELESFLELLRDFKPLPHRMEYLGQIDGRHFYNDSKATSTHAVLGALSNFDKVVLIMCGIGKKENYSLFVEKASPKLKHLIMFGEISKELAPFVGKIPHSIVENMEEAFEKAMEVSEKGDVILLSPGGASFDMYENYAKRGEHFRELFERHGGDKV</sequence>
<comment type="function">
    <text evidence="1">Cell wall formation. Catalyzes the addition of glutamate to the nucleotide precursor UDP-N-acetylmuramoyl-L-alanine (UMA).</text>
</comment>
<comment type="catalytic activity">
    <reaction evidence="1">
        <text>UDP-N-acetyl-alpha-D-muramoyl-L-alanine + D-glutamate + ATP = UDP-N-acetyl-alpha-D-muramoyl-L-alanyl-D-glutamate + ADP + phosphate + H(+)</text>
        <dbReference type="Rhea" id="RHEA:16429"/>
        <dbReference type="ChEBI" id="CHEBI:15378"/>
        <dbReference type="ChEBI" id="CHEBI:29986"/>
        <dbReference type="ChEBI" id="CHEBI:30616"/>
        <dbReference type="ChEBI" id="CHEBI:43474"/>
        <dbReference type="ChEBI" id="CHEBI:83898"/>
        <dbReference type="ChEBI" id="CHEBI:83900"/>
        <dbReference type="ChEBI" id="CHEBI:456216"/>
        <dbReference type="EC" id="6.3.2.9"/>
    </reaction>
</comment>
<comment type="pathway">
    <text evidence="1">Cell wall biogenesis; peptidoglycan biosynthesis.</text>
</comment>
<comment type="subcellular location">
    <subcellularLocation>
        <location evidence="1">Cytoplasm</location>
    </subcellularLocation>
</comment>
<comment type="similarity">
    <text evidence="1">Belongs to the MurCDEF family.</text>
</comment>
<keyword id="KW-0067">ATP-binding</keyword>
<keyword id="KW-0131">Cell cycle</keyword>
<keyword id="KW-0132">Cell division</keyword>
<keyword id="KW-0133">Cell shape</keyword>
<keyword id="KW-0961">Cell wall biogenesis/degradation</keyword>
<keyword id="KW-0963">Cytoplasm</keyword>
<keyword id="KW-0436">Ligase</keyword>
<keyword id="KW-0547">Nucleotide-binding</keyword>
<keyword id="KW-0573">Peptidoglycan synthesis</keyword>
<protein>
    <recommendedName>
        <fullName evidence="1">UDP-N-acetylmuramoylalanine--D-glutamate ligase</fullName>
        <ecNumber evidence="1">6.3.2.9</ecNumber>
    </recommendedName>
    <alternativeName>
        <fullName evidence="1">D-glutamic acid-adding enzyme</fullName>
    </alternativeName>
    <alternativeName>
        <fullName evidence="1">UDP-N-acetylmuramoyl-L-alanyl-D-glutamate synthetase</fullName>
    </alternativeName>
</protein>
<name>MURD_THESQ</name>
<organism>
    <name type="scientific">Thermotoga sp. (strain RQ2)</name>
    <dbReference type="NCBI Taxonomy" id="126740"/>
    <lineage>
        <taxon>Bacteria</taxon>
        <taxon>Thermotogati</taxon>
        <taxon>Thermotogota</taxon>
        <taxon>Thermotogae</taxon>
        <taxon>Thermotogales</taxon>
        <taxon>Thermotogaceae</taxon>
        <taxon>Thermotoga</taxon>
    </lineage>
</organism>
<proteinExistence type="inferred from homology"/>
<feature type="chain" id="PRO_1000130881" description="UDP-N-acetylmuramoylalanine--D-glutamate ligase">
    <location>
        <begin position="1"/>
        <end position="430"/>
    </location>
</feature>
<feature type="binding site" evidence="1">
    <location>
        <begin position="109"/>
        <end position="115"/>
    </location>
    <ligand>
        <name>ATP</name>
        <dbReference type="ChEBI" id="CHEBI:30616"/>
    </ligand>
</feature>
<reference key="1">
    <citation type="journal article" date="2011" name="J. Bacteriol.">
        <title>Genome sequence of Thermotoga sp. strain RQ2, a hyperthermophilic bacterium isolated from a geothermally heated region of the seafloor near Ribeira Quente, the Azores.</title>
        <authorList>
            <person name="Swithers K.S."/>
            <person name="DiPippo J.L."/>
            <person name="Bruce D.C."/>
            <person name="Detter C."/>
            <person name="Tapia R."/>
            <person name="Han S."/>
            <person name="Saunders E."/>
            <person name="Goodwin L.A."/>
            <person name="Han J."/>
            <person name="Woyke T."/>
            <person name="Pitluck S."/>
            <person name="Pennacchio L."/>
            <person name="Nolan M."/>
            <person name="Mikhailova N."/>
            <person name="Lykidis A."/>
            <person name="Land M.L."/>
            <person name="Brettin T."/>
            <person name="Stetter K.O."/>
            <person name="Nelson K.E."/>
            <person name="Gogarten J.P."/>
            <person name="Noll K.M."/>
        </authorList>
    </citation>
    <scope>NUCLEOTIDE SEQUENCE [LARGE SCALE GENOMIC DNA]</scope>
    <source>
        <strain>RQ2</strain>
    </source>
</reference>
<evidence type="ECO:0000255" key="1">
    <source>
        <dbReference type="HAMAP-Rule" id="MF_00639"/>
    </source>
</evidence>
<accession>B1L9R9</accession>
<dbReference type="EC" id="6.3.2.9" evidence="1"/>
<dbReference type="EMBL" id="CP000969">
    <property type="protein sequence ID" value="ACB09067.1"/>
    <property type="molecule type" value="Genomic_DNA"/>
</dbReference>
<dbReference type="RefSeq" id="WP_012310698.1">
    <property type="nucleotide sequence ID" value="NC_010483.1"/>
</dbReference>
<dbReference type="SMR" id="B1L9R9"/>
<dbReference type="KEGG" id="trq:TRQ2_0714"/>
<dbReference type="HOGENOM" id="CLU_032540_0_1_0"/>
<dbReference type="UniPathway" id="UPA00219"/>
<dbReference type="Proteomes" id="UP000001687">
    <property type="component" value="Chromosome"/>
</dbReference>
<dbReference type="GO" id="GO:0005737">
    <property type="term" value="C:cytoplasm"/>
    <property type="evidence" value="ECO:0007669"/>
    <property type="project" value="UniProtKB-SubCell"/>
</dbReference>
<dbReference type="GO" id="GO:0005524">
    <property type="term" value="F:ATP binding"/>
    <property type="evidence" value="ECO:0007669"/>
    <property type="project" value="UniProtKB-UniRule"/>
</dbReference>
<dbReference type="GO" id="GO:0008764">
    <property type="term" value="F:UDP-N-acetylmuramoylalanine-D-glutamate ligase activity"/>
    <property type="evidence" value="ECO:0007669"/>
    <property type="project" value="UniProtKB-UniRule"/>
</dbReference>
<dbReference type="GO" id="GO:0051301">
    <property type="term" value="P:cell division"/>
    <property type="evidence" value="ECO:0007669"/>
    <property type="project" value="UniProtKB-KW"/>
</dbReference>
<dbReference type="GO" id="GO:0071555">
    <property type="term" value="P:cell wall organization"/>
    <property type="evidence" value="ECO:0007669"/>
    <property type="project" value="UniProtKB-KW"/>
</dbReference>
<dbReference type="GO" id="GO:0009252">
    <property type="term" value="P:peptidoglycan biosynthetic process"/>
    <property type="evidence" value="ECO:0007669"/>
    <property type="project" value="UniProtKB-UniRule"/>
</dbReference>
<dbReference type="GO" id="GO:0008360">
    <property type="term" value="P:regulation of cell shape"/>
    <property type="evidence" value="ECO:0007669"/>
    <property type="project" value="UniProtKB-KW"/>
</dbReference>
<dbReference type="Gene3D" id="3.90.190.20">
    <property type="entry name" value="Mur ligase, C-terminal domain"/>
    <property type="match status" value="1"/>
</dbReference>
<dbReference type="Gene3D" id="3.40.1190.10">
    <property type="entry name" value="Mur-like, catalytic domain"/>
    <property type="match status" value="1"/>
</dbReference>
<dbReference type="Gene3D" id="3.40.50.720">
    <property type="entry name" value="NAD(P)-binding Rossmann-like Domain"/>
    <property type="match status" value="1"/>
</dbReference>
<dbReference type="HAMAP" id="MF_00639">
    <property type="entry name" value="MurD"/>
    <property type="match status" value="1"/>
</dbReference>
<dbReference type="InterPro" id="IPR036565">
    <property type="entry name" value="Mur-like_cat_sf"/>
</dbReference>
<dbReference type="InterPro" id="IPR004101">
    <property type="entry name" value="Mur_ligase_C"/>
</dbReference>
<dbReference type="InterPro" id="IPR036615">
    <property type="entry name" value="Mur_ligase_C_dom_sf"/>
</dbReference>
<dbReference type="InterPro" id="IPR013221">
    <property type="entry name" value="Mur_ligase_cen"/>
</dbReference>
<dbReference type="InterPro" id="IPR005762">
    <property type="entry name" value="MurD"/>
</dbReference>
<dbReference type="NCBIfam" id="TIGR01087">
    <property type="entry name" value="murD"/>
    <property type="match status" value="1"/>
</dbReference>
<dbReference type="PANTHER" id="PTHR43692">
    <property type="entry name" value="UDP-N-ACETYLMURAMOYLALANINE--D-GLUTAMATE LIGASE"/>
    <property type="match status" value="1"/>
</dbReference>
<dbReference type="PANTHER" id="PTHR43692:SF1">
    <property type="entry name" value="UDP-N-ACETYLMURAMOYLALANINE--D-GLUTAMATE LIGASE"/>
    <property type="match status" value="1"/>
</dbReference>
<dbReference type="Pfam" id="PF02875">
    <property type="entry name" value="Mur_ligase_C"/>
    <property type="match status" value="1"/>
</dbReference>
<dbReference type="Pfam" id="PF08245">
    <property type="entry name" value="Mur_ligase_M"/>
    <property type="match status" value="1"/>
</dbReference>
<dbReference type="Pfam" id="PF21799">
    <property type="entry name" value="MurD-like_N"/>
    <property type="match status" value="1"/>
</dbReference>
<dbReference type="Pfam" id="PF21377">
    <property type="entry name" value="MurD_N"/>
    <property type="match status" value="1"/>
</dbReference>
<dbReference type="SUPFAM" id="SSF51984">
    <property type="entry name" value="MurCD N-terminal domain"/>
    <property type="match status" value="1"/>
</dbReference>
<dbReference type="SUPFAM" id="SSF53623">
    <property type="entry name" value="MurD-like peptide ligases, catalytic domain"/>
    <property type="match status" value="1"/>
</dbReference>
<dbReference type="SUPFAM" id="SSF53244">
    <property type="entry name" value="MurD-like peptide ligases, peptide-binding domain"/>
    <property type="match status" value="1"/>
</dbReference>
<gene>
    <name evidence="1" type="primary">murD</name>
    <name type="ordered locus">TRQ2_0714</name>
</gene>